<keyword id="KW-0066">ATP synthesis</keyword>
<keyword id="KW-1003">Cell membrane</keyword>
<keyword id="KW-0139">CF(1)</keyword>
<keyword id="KW-0375">Hydrogen ion transport</keyword>
<keyword id="KW-0406">Ion transport</keyword>
<keyword id="KW-0472">Membrane</keyword>
<keyword id="KW-0813">Transport</keyword>
<reference key="1">
    <citation type="submission" date="2009-03" db="EMBL/GenBank/DDBJ databases">
        <title>Comparison of the complete genome sequences of Rhodococcus erythropolis PR4 and Rhodococcus opacus B4.</title>
        <authorList>
            <person name="Takarada H."/>
            <person name="Sekine M."/>
            <person name="Hosoyama A."/>
            <person name="Yamada R."/>
            <person name="Fujisawa T."/>
            <person name="Omata S."/>
            <person name="Shimizu A."/>
            <person name="Tsukatani N."/>
            <person name="Tanikawa S."/>
            <person name="Fujita N."/>
            <person name="Harayama S."/>
        </authorList>
    </citation>
    <scope>NUCLEOTIDE SEQUENCE [LARGE SCALE GENOMIC DNA]</scope>
    <source>
        <strain>B4</strain>
    </source>
</reference>
<name>ATPD_RHOOB</name>
<dbReference type="EMBL" id="AP011115">
    <property type="protein sequence ID" value="BAH49432.1"/>
    <property type="molecule type" value="Genomic_DNA"/>
</dbReference>
<dbReference type="SMR" id="C1AW02"/>
<dbReference type="STRING" id="632772.ROP_11850"/>
<dbReference type="KEGG" id="rop:ROP_11850"/>
<dbReference type="PATRIC" id="fig|632772.20.peg.1255"/>
<dbReference type="HOGENOM" id="CLU_088880_0_0_11"/>
<dbReference type="OrthoDB" id="5242917at2"/>
<dbReference type="Proteomes" id="UP000002212">
    <property type="component" value="Chromosome"/>
</dbReference>
<dbReference type="GO" id="GO:0005886">
    <property type="term" value="C:plasma membrane"/>
    <property type="evidence" value="ECO:0007669"/>
    <property type="project" value="UniProtKB-SubCell"/>
</dbReference>
<dbReference type="GO" id="GO:0045259">
    <property type="term" value="C:proton-transporting ATP synthase complex"/>
    <property type="evidence" value="ECO:0007669"/>
    <property type="project" value="UniProtKB-KW"/>
</dbReference>
<dbReference type="GO" id="GO:0046933">
    <property type="term" value="F:proton-transporting ATP synthase activity, rotational mechanism"/>
    <property type="evidence" value="ECO:0007669"/>
    <property type="project" value="UniProtKB-UniRule"/>
</dbReference>
<dbReference type="Gene3D" id="1.10.520.20">
    <property type="entry name" value="N-terminal domain of the delta subunit of the F1F0-ATP synthase"/>
    <property type="match status" value="1"/>
</dbReference>
<dbReference type="HAMAP" id="MF_01416">
    <property type="entry name" value="ATP_synth_delta_bact"/>
    <property type="match status" value="1"/>
</dbReference>
<dbReference type="InterPro" id="IPR026015">
    <property type="entry name" value="ATP_synth_OSCP/delta_N_sf"/>
</dbReference>
<dbReference type="InterPro" id="IPR020781">
    <property type="entry name" value="ATPase_OSCP/d_CS"/>
</dbReference>
<dbReference type="InterPro" id="IPR000711">
    <property type="entry name" value="ATPase_OSCP/dsu"/>
</dbReference>
<dbReference type="NCBIfam" id="TIGR01145">
    <property type="entry name" value="ATP_synt_delta"/>
    <property type="match status" value="1"/>
</dbReference>
<dbReference type="NCBIfam" id="NF009967">
    <property type="entry name" value="PRK13430.1"/>
    <property type="match status" value="1"/>
</dbReference>
<dbReference type="PANTHER" id="PTHR11910">
    <property type="entry name" value="ATP SYNTHASE DELTA CHAIN"/>
    <property type="match status" value="1"/>
</dbReference>
<dbReference type="Pfam" id="PF00213">
    <property type="entry name" value="OSCP"/>
    <property type="match status" value="1"/>
</dbReference>
<dbReference type="PROSITE" id="PS00389">
    <property type="entry name" value="ATPASE_DELTA"/>
    <property type="match status" value="1"/>
</dbReference>
<protein>
    <recommendedName>
        <fullName evidence="1">ATP synthase subunit delta</fullName>
    </recommendedName>
    <alternativeName>
        <fullName evidence="1">ATP synthase F(1) sector subunit delta</fullName>
    </alternativeName>
    <alternativeName>
        <fullName evidence="1">F-type ATPase subunit delta</fullName>
        <shortName evidence="1">F-ATPase subunit delta</shortName>
    </alternativeName>
</protein>
<organism>
    <name type="scientific">Rhodococcus opacus (strain B4)</name>
    <dbReference type="NCBI Taxonomy" id="632772"/>
    <lineage>
        <taxon>Bacteria</taxon>
        <taxon>Bacillati</taxon>
        <taxon>Actinomycetota</taxon>
        <taxon>Actinomycetes</taxon>
        <taxon>Mycobacteriales</taxon>
        <taxon>Nocardiaceae</taxon>
        <taxon>Rhodococcus</taxon>
    </lineage>
</organism>
<proteinExistence type="inferred from homology"/>
<evidence type="ECO:0000255" key="1">
    <source>
        <dbReference type="HAMAP-Rule" id="MF_01416"/>
    </source>
</evidence>
<accession>C1AW02</accession>
<gene>
    <name evidence="1" type="primary">atpH</name>
    <name type="ordered locus">ROP_11850</name>
</gene>
<comment type="function">
    <text evidence="1">F(1)F(0) ATP synthase produces ATP from ADP in the presence of a proton or sodium gradient. F-type ATPases consist of two structural domains, F(1) containing the extramembraneous catalytic core and F(0) containing the membrane proton channel, linked together by a central stalk and a peripheral stalk. During catalysis, ATP synthesis in the catalytic domain of F(1) is coupled via a rotary mechanism of the central stalk subunits to proton translocation.</text>
</comment>
<comment type="function">
    <text evidence="1">This protein is part of the stalk that links CF(0) to CF(1). It either transmits conformational changes from CF(0) to CF(1) or is implicated in proton conduction.</text>
</comment>
<comment type="subunit">
    <text evidence="1">F-type ATPases have 2 components, F(1) - the catalytic core - and F(0) - the membrane proton channel. F(1) has five subunits: alpha(3), beta(3), gamma(1), delta(1), epsilon(1). F(0) has three main subunits: a(1), b(2) and c(10-14). The alpha and beta chains form an alternating ring which encloses part of the gamma chain. F(1) is attached to F(0) by a central stalk formed by the gamma and epsilon chains, while a peripheral stalk is formed by the delta and b chains.</text>
</comment>
<comment type="subcellular location">
    <subcellularLocation>
        <location evidence="1">Cell membrane</location>
        <topology evidence="1">Peripheral membrane protein</topology>
    </subcellularLocation>
</comment>
<comment type="similarity">
    <text evidence="1">Belongs to the ATPase delta chain family.</text>
</comment>
<sequence>MSTMYAASREALTQTRAALSSALGSVSAGAATAAAAQIGAELFSVVEILDEQRTLRSALSDTSTTGSVREGLAERVFGSKVSAETLAVVKSAAGQDWSVTSDLLNSLVLLGRESLLKAAADQGQLDAVEDELFRLGRIVAGDPKLEQSLSDRSVPAKGKRDLLSKLLYGKVTAVSEALATQAVGRLKNSAPADAFDELSNLAAAQRKAVVAKVRSAAPLSSEQSDRLTATLTRTYGKPVTVHVEVDPELLSGLVVRVGDEVIDGSGAGRLAALRKSLK</sequence>
<feature type="chain" id="PRO_1000184778" description="ATP synthase subunit delta">
    <location>
        <begin position="1"/>
        <end position="278"/>
    </location>
</feature>